<proteinExistence type="evidence at protein level"/>
<organism>
    <name type="scientific">Pseudomonas aeruginosa (strain UCBPP-PA14)</name>
    <dbReference type="NCBI Taxonomy" id="208963"/>
    <lineage>
        <taxon>Bacteria</taxon>
        <taxon>Pseudomonadati</taxon>
        <taxon>Pseudomonadota</taxon>
        <taxon>Gammaproteobacteria</taxon>
        <taxon>Pseudomonadales</taxon>
        <taxon>Pseudomonadaceae</taxon>
        <taxon>Pseudomonas</taxon>
    </lineage>
</organism>
<name>CAS3_PSEAB</name>
<evidence type="ECO:0000250" key="1"/>
<evidence type="ECO:0000255" key="2"/>
<evidence type="ECO:0000255" key="3">
    <source>
        <dbReference type="PROSITE-ProRule" id="PRU00974"/>
    </source>
</evidence>
<evidence type="ECO:0000269" key="4">
    <source>
    </source>
</evidence>
<evidence type="ECO:0000269" key="5">
    <source>
    </source>
</evidence>
<evidence type="ECO:0000305" key="6"/>
<evidence type="ECO:0007829" key="7">
    <source>
        <dbReference type="PDB" id="5B7I"/>
    </source>
</evidence>
<evidence type="ECO:0007829" key="8">
    <source>
        <dbReference type="PDB" id="8FLJ"/>
    </source>
</evidence>
<feature type="chain" id="PRO_0000417605" description="CRISPR-associated nuclease/helicase Cas3 subtype I-F/YPEST">
    <location>
        <begin position="1"/>
        <end position="1076"/>
    </location>
</feature>
<feature type="domain" description="HD Cas3-type" evidence="3">
    <location>
        <begin position="102"/>
        <end position="318"/>
    </location>
</feature>
<feature type="short sequence motif" description="DEAD box">
    <location>
        <begin position="576"/>
        <end position="579"/>
    </location>
</feature>
<feature type="binding site" evidence="2">
    <location>
        <position position="124"/>
    </location>
    <ligand>
        <name>Mg(2+)</name>
        <dbReference type="ChEBI" id="CHEBI:18420"/>
    </ligand>
</feature>
<feature type="binding site" evidence="2">
    <location>
        <position position="220"/>
    </location>
    <ligand>
        <name>Mg(2+)</name>
        <dbReference type="ChEBI" id="CHEBI:18420"/>
    </ligand>
</feature>
<feature type="mutagenesis site" description="In a disruption mutant, does not restore biofilm formation, restores crRNA production." evidence="5">
    <original>D</original>
    <variation>A</variation>
    <location>
        <position position="124"/>
    </location>
</feature>
<feature type="mutagenesis site" description="In a disruption mutant, does not restore biofilm formation, restores crRNA production." evidence="5">
    <original>D</original>
    <variation>A</variation>
    <location>
        <position position="576"/>
    </location>
</feature>
<feature type="strand" evidence="7">
    <location>
        <begin position="1"/>
        <end position="7"/>
    </location>
</feature>
<feature type="helix" evidence="7">
    <location>
        <begin position="11"/>
        <end position="24"/>
    </location>
</feature>
<feature type="strand" evidence="7">
    <location>
        <begin position="29"/>
        <end position="37"/>
    </location>
</feature>
<feature type="helix" evidence="7">
    <location>
        <begin position="39"/>
        <end position="51"/>
    </location>
</feature>
<feature type="strand" evidence="7">
    <location>
        <begin position="58"/>
        <end position="64"/>
    </location>
</feature>
<feature type="strand" evidence="7">
    <location>
        <begin position="66"/>
        <end position="68"/>
    </location>
</feature>
<feature type="strand" evidence="7">
    <location>
        <begin position="70"/>
        <end position="77"/>
    </location>
</feature>
<feature type="helix" evidence="8">
    <location>
        <begin position="79"/>
        <end position="81"/>
    </location>
</feature>
<feature type="strand" evidence="7">
    <location>
        <begin position="84"/>
        <end position="87"/>
    </location>
</feature>
<feature type="strand" evidence="8">
    <location>
        <begin position="90"/>
        <end position="93"/>
    </location>
</feature>
<feature type="helix" evidence="7">
    <location>
        <begin position="109"/>
        <end position="122"/>
    </location>
</feature>
<feature type="helix" evidence="7">
    <location>
        <begin position="125"/>
        <end position="128"/>
    </location>
</feature>
<feature type="helix" evidence="7">
    <location>
        <begin position="130"/>
        <end position="137"/>
    </location>
</feature>
<feature type="helix" evidence="7">
    <location>
        <begin position="149"/>
        <end position="161"/>
    </location>
</feature>
<feature type="helix" evidence="7">
    <location>
        <begin position="167"/>
        <end position="175"/>
    </location>
</feature>
<feature type="helix" evidence="7">
    <location>
        <begin position="183"/>
        <end position="186"/>
    </location>
</feature>
<feature type="strand" evidence="7">
    <location>
        <begin position="193"/>
        <end position="195"/>
    </location>
</feature>
<feature type="turn" evidence="8">
    <location>
        <begin position="203"/>
        <end position="205"/>
    </location>
</feature>
<feature type="helix" evidence="7">
    <location>
        <begin position="208"/>
        <end position="218"/>
    </location>
</feature>
<feature type="strand" evidence="7">
    <location>
        <begin position="220"/>
        <end position="222"/>
    </location>
</feature>
<feature type="helix" evidence="7">
    <location>
        <begin position="231"/>
        <end position="236"/>
    </location>
</feature>
<feature type="turn" evidence="7">
    <location>
        <begin position="237"/>
        <end position="240"/>
    </location>
</feature>
<feature type="helix" evidence="7">
    <location>
        <begin position="243"/>
        <end position="245"/>
    </location>
</feature>
<feature type="turn" evidence="7">
    <location>
        <begin position="246"/>
        <end position="249"/>
    </location>
</feature>
<feature type="helix" evidence="8">
    <location>
        <begin position="253"/>
        <end position="258"/>
    </location>
</feature>
<feature type="helix" evidence="7">
    <location>
        <begin position="267"/>
        <end position="269"/>
    </location>
</feature>
<feature type="helix" evidence="7">
    <location>
        <begin position="271"/>
        <end position="285"/>
    </location>
</feature>
<feature type="helix" evidence="7">
    <location>
        <begin position="290"/>
        <end position="298"/>
    </location>
</feature>
<feature type="helix" evidence="7">
    <location>
        <begin position="301"/>
        <end position="320"/>
    </location>
</feature>
<feature type="strand" evidence="8">
    <location>
        <begin position="335"/>
        <end position="338"/>
    </location>
</feature>
<feature type="strand" evidence="7">
    <location>
        <begin position="340"/>
        <end position="342"/>
    </location>
</feature>
<feature type="strand" evidence="8">
    <location>
        <begin position="344"/>
        <end position="348"/>
    </location>
</feature>
<feature type="helix" evidence="7">
    <location>
        <begin position="349"/>
        <end position="366"/>
    </location>
</feature>
<feature type="helix" evidence="7">
    <location>
        <begin position="367"/>
        <end position="369"/>
    </location>
</feature>
<feature type="helix" evidence="7">
    <location>
        <begin position="370"/>
        <end position="373"/>
    </location>
</feature>
<feature type="helix" evidence="7">
    <location>
        <begin position="381"/>
        <end position="384"/>
    </location>
</feature>
<feature type="helix" evidence="8">
    <location>
        <begin position="390"/>
        <end position="392"/>
    </location>
</feature>
<feature type="helix" evidence="7">
    <location>
        <begin position="393"/>
        <end position="412"/>
    </location>
</feature>
<feature type="strand" evidence="7">
    <location>
        <begin position="414"/>
        <end position="418"/>
    </location>
</feature>
<feature type="helix" evidence="7">
    <location>
        <begin position="426"/>
        <end position="437"/>
    </location>
</feature>
<feature type="turn" evidence="7">
    <location>
        <begin position="440"/>
        <end position="442"/>
    </location>
</feature>
<feature type="strand" evidence="7">
    <location>
        <begin position="446"/>
        <end position="453"/>
    </location>
</feature>
<feature type="helix" evidence="7">
    <location>
        <begin position="457"/>
        <end position="467"/>
    </location>
</feature>
<feature type="turn" evidence="7">
    <location>
        <begin position="471"/>
        <end position="473"/>
    </location>
</feature>
<feature type="strand" evidence="7">
    <location>
        <begin position="474"/>
        <end position="479"/>
    </location>
</feature>
<feature type="helix" evidence="8">
    <location>
        <begin position="484"/>
        <end position="496"/>
    </location>
</feature>
<feature type="helix" evidence="8">
    <location>
        <begin position="500"/>
        <end position="502"/>
    </location>
</feature>
<feature type="strand" evidence="7">
    <location>
        <begin position="511"/>
        <end position="513"/>
    </location>
</feature>
<feature type="helix" evidence="8">
    <location>
        <begin position="518"/>
        <end position="520"/>
    </location>
</feature>
<feature type="turn" evidence="7">
    <location>
        <begin position="522"/>
        <end position="526"/>
    </location>
</feature>
<feature type="strand" evidence="7">
    <location>
        <begin position="529"/>
        <end position="531"/>
    </location>
</feature>
<feature type="helix" evidence="7">
    <location>
        <begin position="532"/>
        <end position="538"/>
    </location>
</feature>
<feature type="strand" evidence="7">
    <location>
        <begin position="540"/>
        <end position="545"/>
    </location>
</feature>
<feature type="helix" evidence="7">
    <location>
        <begin position="546"/>
        <end position="549"/>
    </location>
</feature>
<feature type="helix" evidence="7">
    <location>
        <begin position="551"/>
        <end position="554"/>
    </location>
</feature>
<feature type="turn" evidence="7">
    <location>
        <begin position="558"/>
        <end position="561"/>
    </location>
</feature>
<feature type="helix" evidence="7">
    <location>
        <begin position="562"/>
        <end position="570"/>
    </location>
</feature>
<feature type="strand" evidence="7">
    <location>
        <begin position="571"/>
        <end position="576"/>
    </location>
</feature>
<feature type="helix" evidence="7">
    <location>
        <begin position="578"/>
        <end position="580"/>
    </location>
</feature>
<feature type="helix" evidence="7">
    <location>
        <begin position="583"/>
        <end position="585"/>
    </location>
</feature>
<feature type="helix" evidence="7">
    <location>
        <begin position="586"/>
        <end position="598"/>
    </location>
</feature>
<feature type="strand" evidence="7">
    <location>
        <begin position="603"/>
        <end position="606"/>
    </location>
</feature>
<feature type="helix" evidence="7">
    <location>
        <begin position="612"/>
        <end position="631"/>
    </location>
</feature>
<feature type="strand" evidence="7">
    <location>
        <begin position="632"/>
        <end position="635"/>
    </location>
</feature>
<feature type="strand" evidence="7">
    <location>
        <begin position="642"/>
        <end position="647"/>
    </location>
</feature>
<feature type="strand" evidence="7">
    <location>
        <begin position="652"/>
        <end position="659"/>
    </location>
</feature>
<feature type="helix" evidence="7">
    <location>
        <begin position="660"/>
        <end position="679"/>
    </location>
</feature>
<feature type="strand" evidence="7">
    <location>
        <begin position="687"/>
        <end position="690"/>
    </location>
</feature>
<feature type="helix" evidence="7">
    <location>
        <begin position="699"/>
        <end position="720"/>
    </location>
</feature>
<feature type="strand" evidence="7">
    <location>
        <begin position="723"/>
        <end position="725"/>
    </location>
</feature>
<feature type="strand" evidence="7">
    <location>
        <begin position="728"/>
        <end position="736"/>
    </location>
</feature>
<feature type="helix" evidence="7">
    <location>
        <begin position="740"/>
        <end position="752"/>
    </location>
</feature>
<feature type="strand" evidence="7">
    <location>
        <begin position="759"/>
        <end position="766"/>
    </location>
</feature>
<feature type="strand" evidence="7">
    <location>
        <begin position="768"/>
        <end position="770"/>
    </location>
</feature>
<feature type="helix" evidence="7">
    <location>
        <begin position="772"/>
        <end position="785"/>
    </location>
</feature>
<feature type="helix" evidence="7">
    <location>
        <begin position="793"/>
        <end position="798"/>
    </location>
</feature>
<feature type="helix" evidence="7">
    <location>
        <begin position="800"/>
        <end position="808"/>
    </location>
</feature>
<feature type="strand" evidence="7">
    <location>
        <begin position="812"/>
        <end position="820"/>
    </location>
</feature>
<feature type="helix" evidence="7">
    <location>
        <begin position="822"/>
        <end position="824"/>
    </location>
</feature>
<feature type="strand" evidence="7">
    <location>
        <begin position="825"/>
        <end position="827"/>
    </location>
</feature>
<feature type="strand" evidence="7">
    <location>
        <begin position="832"/>
        <end position="837"/>
    </location>
</feature>
<feature type="helix" evidence="7">
    <location>
        <begin position="842"/>
        <end position="849"/>
    </location>
</feature>
<feature type="strand" evidence="7">
    <location>
        <begin position="852"/>
        <end position="855"/>
    </location>
</feature>
<feature type="strand" evidence="7">
    <location>
        <begin position="865"/>
        <end position="870"/>
    </location>
</feature>
<feature type="helix" evidence="7">
    <location>
        <begin position="872"/>
        <end position="875"/>
    </location>
</feature>
<feature type="strand" evidence="7">
    <location>
        <begin position="884"/>
        <end position="887"/>
    </location>
</feature>
<feature type="strand" evidence="7">
    <location>
        <begin position="890"/>
        <end position="892"/>
    </location>
</feature>
<feature type="helix" evidence="7">
    <location>
        <begin position="899"/>
        <end position="902"/>
    </location>
</feature>
<feature type="helix" evidence="7">
    <location>
        <begin position="905"/>
        <end position="907"/>
    </location>
</feature>
<feature type="helix" evidence="7">
    <location>
        <begin position="914"/>
        <end position="917"/>
    </location>
</feature>
<feature type="turn" evidence="7">
    <location>
        <begin position="925"/>
        <end position="927"/>
    </location>
</feature>
<feature type="helix" evidence="7">
    <location>
        <begin position="929"/>
        <end position="940"/>
    </location>
</feature>
<feature type="turn" evidence="7">
    <location>
        <begin position="947"/>
        <end position="949"/>
    </location>
</feature>
<feature type="helix" evidence="7">
    <location>
        <begin position="955"/>
        <end position="958"/>
    </location>
</feature>
<feature type="helix" evidence="7">
    <location>
        <begin position="960"/>
        <end position="963"/>
    </location>
</feature>
<feature type="helix" evidence="7">
    <location>
        <begin position="966"/>
        <end position="970"/>
    </location>
</feature>
<feature type="strand" evidence="7">
    <location>
        <begin position="982"/>
        <end position="986"/>
    </location>
</feature>
<feature type="strand" evidence="7">
    <location>
        <begin position="994"/>
        <end position="999"/>
    </location>
</feature>
<feature type="strand" evidence="7">
    <location>
        <begin position="1001"/>
        <end position="1006"/>
    </location>
</feature>
<feature type="helix" evidence="7">
    <location>
        <begin position="1008"/>
        <end position="1010"/>
    </location>
</feature>
<feature type="strand" evidence="7">
    <location>
        <begin position="1011"/>
        <end position="1013"/>
    </location>
</feature>
<feature type="strand" evidence="7">
    <location>
        <begin position="1022"/>
        <end position="1024"/>
    </location>
</feature>
<feature type="helix" evidence="7">
    <location>
        <begin position="1030"/>
        <end position="1040"/>
    </location>
</feature>
<feature type="helix" evidence="7">
    <location>
        <begin position="1045"/>
        <end position="1052"/>
    </location>
</feature>
<feature type="strand" evidence="8">
    <location>
        <begin position="1053"/>
        <end position="1058"/>
    </location>
</feature>
<feature type="strand" evidence="7">
    <location>
        <begin position="1064"/>
        <end position="1067"/>
    </location>
</feature>
<feature type="turn" evidence="7">
    <location>
        <begin position="1068"/>
        <end position="1070"/>
    </location>
</feature>
<feature type="strand" evidence="7">
    <location>
        <begin position="1071"/>
        <end position="1074"/>
    </location>
</feature>
<reference key="1">
    <citation type="journal article" date="2006" name="Genome Biol.">
        <title>Genomic analysis reveals that Pseudomonas aeruginosa virulence is combinatorial.</title>
        <authorList>
            <person name="Lee D.G."/>
            <person name="Urbach J.M."/>
            <person name="Wu G."/>
            <person name="Liberati N.T."/>
            <person name="Feinbaum R.L."/>
            <person name="Miyata S."/>
            <person name="Diggins L.T."/>
            <person name="He J."/>
            <person name="Saucier M."/>
            <person name="Deziel E."/>
            <person name="Friedman L."/>
            <person name="Li L."/>
            <person name="Grills G."/>
            <person name="Montgomery K."/>
            <person name="Kucherlapati R."/>
            <person name="Rahme L.G."/>
            <person name="Ausubel F.M."/>
        </authorList>
    </citation>
    <scope>NUCLEOTIDE SEQUENCE [LARGE SCALE GENOMIC DNA]</scope>
    <source>
        <strain>UCBPP-PA14</strain>
    </source>
</reference>
<reference key="2">
    <citation type="journal article" date="2009" name="J. Bacteriol.">
        <title>Interaction between bacteriophage DMS3 and host CRISPR region inhibits group behaviors of Pseudomonas aeruginosa.</title>
        <authorList>
            <person name="Zegans M.E."/>
            <person name="Wagner J.C."/>
            <person name="Cady K.C."/>
            <person name="Murphy D.M."/>
            <person name="Hammond J.H."/>
            <person name="O'Toole G.A."/>
        </authorList>
    </citation>
    <scope>POSSIBLE FUNCTION</scope>
</reference>
<reference key="3">
    <citation type="journal article" date="2011" name="J. Bacteriol.">
        <title>Non-identity-mediated CRISPR-bacteriophage interaction mediated via the Csy and Cas3 proteins.</title>
        <authorList>
            <person name="Cady K.C."/>
            <person name="O'Toole G.A."/>
        </authorList>
    </citation>
    <scope>FUNCTION IN INHIBITION OF BIOFILM FORMATION</scope>
    <scope>DISRUPTION PHENOTYPE</scope>
    <scope>MUTAGENESIS OF ASP-124 AND ASP-576</scope>
    <source>
        <strain>UCBPP-PA14</strain>
    </source>
</reference>
<reference key="4">
    <citation type="journal article" date="2011" name="Microbiology">
        <title>Prevalence, conservation and functional analysis of Yersinia and Escherichia CRISPR regions in clinical Pseudomonas aeruginosa isolates.</title>
        <authorList>
            <person name="Cady K.C."/>
            <person name="White A.S."/>
            <person name="Hammond J.H."/>
            <person name="Abendroth M.D."/>
            <person name="Karthikeyan R.S."/>
            <person name="Lalitha P."/>
            <person name="Zegans M.E."/>
            <person name="O'Toole G.A."/>
        </authorList>
    </citation>
    <scope>NO ROLE IN PHAGE PROTECTION</scope>
    <scope>DISRUPTION PHENOTYPE</scope>
    <source>
        <strain>UCBPP-PA14</strain>
    </source>
</reference>
<protein>
    <recommendedName>
        <fullName>CRISPR-associated nuclease/helicase Cas3 subtype I-F/YPEST</fullName>
        <ecNumber>3.1.-.-</ecNumber>
        <ecNumber>3.6.4.-</ecNumber>
    </recommendedName>
</protein>
<gene>
    <name type="primary">cas3</name>
    <name type="ordered locus">PA14_33340</name>
</gene>
<sequence>MNILLVSQCEKRALSETRRILDQFAERRGERTWQTPITQAGLDTLRRLLKKSARRNTAVACHWIRGRDHSELLWIVGDASRFNAQGAVPTNRTCRDILRKEDENDWHSAEDIRLLTVMAALFHDIGKASQAFQAKLRNRGKPMADAYRHEWVSLRLFEAFVGPGSSDEDWLRRLADKRETGDAWLSQLARDDRQSAPPGPFQKSRLPPLAQAVGWLIVSHHRLPNGDHRGSASLARLPAPIQSQWCGARDADAKEKAACWQFPHGLPFASAHWRARTALCAQSMLERPGLLARGPALLHDSYVMHVSRLILMLADHHYSSLPADSRLGDPNFPLHANTDRDSGKLKQRLDEHLLGVALHSRKLAGTLPRLERQLPRLARHKGFTRRVEQPRFRWQDKAYDCAMACREQAMEHGFFGLNLASTGCGKTLANGRILYALADPQRGARFSIALGLRSLTLQTGQAYRERLGLGDDDLAILVGGSAARELFEKQQERLERSGSESAQELLAENSHVHFAGTLEDGPLREWLGRNSAGNRLLQAPILACTIDHLMPASESLRGGHQIAPLLRLMTSDLVLDEVDDFDIDDLPALSRLVHWAGLFGSRVLLSSATLPPALVQGLFEAYRSGREIFQRHRGAPGRATEIRCAWFDEFSSQSSAHGAVTSFSEAHATFVAQRLAKLEQLPPRRQAQLCTVHAAGEARPALCRELAGQMNTWMADLHRCHHTEHQGRRISFGLLRLANIEPLIELAQAILAQGAPEGLHVHLCVYHSRHPLLVRSAIERQLDELLKRSDDDAAALFARPTLAKALQASTERDHLFVVLASPVAEVGRDHDYDWAIVEPSSMRSIIQLAGRIRRHRSGFSGEANLYLLSRNIRSLEGQNPAFQRPGFETPDFPLDSHDLHDLLDPALLARIDASPRIVEPFPLFPRSRLVDLEHRRLRALMLADDPPSSLLGVPLWWQTPASLSGALQTSQPFRAGAKERCYALLPDEDDEERLHFSRYEEGTWSNQDNLLRNLDLTYGPRIQTWGTVNYREELVAMAGREDLDLRQCAMRYGEVRLRENTQGWSYHPYLGFKKYN</sequence>
<comment type="function">
    <text evidence="6">CRISPR (clustered regularly interspaced short palindromic repeat), is an adaptive immune system that provides protection against mobile genetic elements (viruses, transposable elements and conjugative plasmids). CRISPR clusters contain sequences complementary to antecedent mobile elements and target invading nucleic acids. CRISPR clusters are transcribed and processed into CRISPR RNA (crRNA). Cas3 plus Cascade participate in CRISPR interference, the third stage of CRISPR immunity (Potential).</text>
</comment>
<comment type="function">
    <text evidence="5">In this bacteria Y.pestis-subtype CRISPRs do not confer resistance to phage DSM3 or MP22, but instead are required for DMS3-dependent inhibition of biofilm formation and possibly motility.</text>
</comment>
<comment type="subunit">
    <text evidence="1">Interacts with Cas1.</text>
</comment>
<comment type="disruption phenotype">
    <text evidence="4 5">Infection with phage DSM3 inhibits biofilm formation; disrupting this gene restores biofilm formation upon infection with DMS3 infection. Normal biofilm formation in the absence of phage infection. Decreased production of crRNA in the presence or absence of phage. Disruption of the entire Y.pestis-subtype CRISPR region disrupts crRNA production but does not alter phage resistance (possibly OLNs PA14_33350 to PA14_33310, plus the flanking CRISPR loci), indicating this CRISPR is not involved in phage resistance.</text>
</comment>
<comment type="similarity">
    <text evidence="6">In the N-terminal section; belongs to the CRISPR-associated nuclease Cas3-HD family.</text>
</comment>
<comment type="similarity">
    <text evidence="6">In the central section; belongs to the CRISPR-associated helicase Cas3 family.</text>
</comment>
<keyword id="KW-0002">3D-structure</keyword>
<keyword id="KW-0051">Antiviral defense</keyword>
<keyword id="KW-0067">ATP-binding</keyword>
<keyword id="KW-0347">Helicase</keyword>
<keyword id="KW-0378">Hydrolase</keyword>
<keyword id="KW-0460">Magnesium</keyword>
<keyword id="KW-0479">Metal-binding</keyword>
<keyword id="KW-0547">Nucleotide-binding</keyword>
<accession>Q02ML8</accession>
<dbReference type="EC" id="3.1.-.-"/>
<dbReference type="EC" id="3.6.4.-"/>
<dbReference type="EMBL" id="CP000438">
    <property type="protein sequence ID" value="ABJ11601.1"/>
    <property type="molecule type" value="Genomic_DNA"/>
</dbReference>
<dbReference type="PDB" id="5B7I">
    <property type="method" value="X-ray"/>
    <property type="resolution" value="2.60 A"/>
    <property type="chains" value="A=1-1076"/>
</dbReference>
<dbReference type="PDB" id="5GQH">
    <property type="method" value="EM"/>
    <property type="resolution" value="4.20 A"/>
    <property type="chains" value="A=1-1076"/>
</dbReference>
<dbReference type="PDB" id="8FLJ">
    <property type="method" value="EM"/>
    <property type="resolution" value="3.48 A"/>
    <property type="chains" value="M/N=1-1076"/>
</dbReference>
<dbReference type="PDBsum" id="5B7I"/>
<dbReference type="PDBsum" id="5GQH"/>
<dbReference type="PDBsum" id="8FLJ"/>
<dbReference type="EMDB" id="EMD-29280"/>
<dbReference type="EMDB" id="EMD-9535"/>
<dbReference type="SMR" id="Q02ML8"/>
<dbReference type="DIP" id="DIP-61771N"/>
<dbReference type="IntAct" id="Q02ML8">
    <property type="interactions" value="1"/>
</dbReference>
<dbReference type="KEGG" id="pau:PA14_33340"/>
<dbReference type="PseudoCAP" id="PA14_33340"/>
<dbReference type="HOGENOM" id="CLU_009385_0_0_6"/>
<dbReference type="BioCyc" id="PAER208963:G1G74-2806-MONOMER"/>
<dbReference type="Proteomes" id="UP000000653">
    <property type="component" value="Chromosome"/>
</dbReference>
<dbReference type="GO" id="GO:0005524">
    <property type="term" value="F:ATP binding"/>
    <property type="evidence" value="ECO:0007669"/>
    <property type="project" value="UniProtKB-KW"/>
</dbReference>
<dbReference type="GO" id="GO:0004386">
    <property type="term" value="F:helicase activity"/>
    <property type="evidence" value="ECO:0007669"/>
    <property type="project" value="UniProtKB-KW"/>
</dbReference>
<dbReference type="GO" id="GO:0016787">
    <property type="term" value="F:hydrolase activity"/>
    <property type="evidence" value="ECO:0007669"/>
    <property type="project" value="UniProtKB-KW"/>
</dbReference>
<dbReference type="GO" id="GO:0046872">
    <property type="term" value="F:metal ion binding"/>
    <property type="evidence" value="ECO:0007669"/>
    <property type="project" value="UniProtKB-KW"/>
</dbReference>
<dbReference type="GO" id="GO:0051607">
    <property type="term" value="P:defense response to virus"/>
    <property type="evidence" value="ECO:0007669"/>
    <property type="project" value="UniProtKB-KW"/>
</dbReference>
<dbReference type="Gene3D" id="1.10.3210.30">
    <property type="match status" value="1"/>
</dbReference>
<dbReference type="InterPro" id="IPR048824">
    <property type="entry name" value="Cas3-like_C"/>
</dbReference>
<dbReference type="InterPro" id="IPR054712">
    <property type="entry name" value="Cas3-like_dom"/>
</dbReference>
<dbReference type="InterPro" id="IPR048823">
    <property type="entry name" value="Cas3_I-F_Cas2"/>
</dbReference>
<dbReference type="InterPro" id="IPR006483">
    <property type="entry name" value="CRISPR-assoc_Cas3_HD"/>
</dbReference>
<dbReference type="InterPro" id="IPR038257">
    <property type="entry name" value="CRISPR-assoc_Cas3_HD_sf"/>
</dbReference>
<dbReference type="InterPro" id="IPR013395">
    <property type="entry name" value="CRISPR-assoc_Cas3_yers"/>
</dbReference>
<dbReference type="InterPro" id="IPR027417">
    <property type="entry name" value="P-loop_NTPase"/>
</dbReference>
<dbReference type="NCBIfam" id="TIGR02562">
    <property type="entry name" value="cas3_yersinia"/>
    <property type="match status" value="1"/>
</dbReference>
<dbReference type="Pfam" id="PF21802">
    <property type="entry name" value="Cas3-like_C"/>
    <property type="match status" value="1"/>
</dbReference>
<dbReference type="Pfam" id="PF22590">
    <property type="entry name" value="Cas3-like_C_2"/>
    <property type="match status" value="1"/>
</dbReference>
<dbReference type="Pfam" id="PF18019">
    <property type="entry name" value="Cas3_HD"/>
    <property type="match status" value="1"/>
</dbReference>
<dbReference type="Pfam" id="PF21384">
    <property type="entry name" value="Cas3_I-F_Cas2"/>
    <property type="match status" value="1"/>
</dbReference>
<dbReference type="SUPFAM" id="SSF52540">
    <property type="entry name" value="P-loop containing nucleoside triphosphate hydrolases"/>
    <property type="match status" value="1"/>
</dbReference>
<dbReference type="PROSITE" id="PS51643">
    <property type="entry name" value="HD_CAS3"/>
    <property type="match status" value="1"/>
</dbReference>